<accession>P33692</accession>
<organism>
    <name type="scientific">Rhizobium meliloti (strain 1021)</name>
    <name type="common">Ensifer meliloti</name>
    <name type="synonym">Sinorhizobium meliloti</name>
    <dbReference type="NCBI Taxonomy" id="266834"/>
    <lineage>
        <taxon>Bacteria</taxon>
        <taxon>Pseudomonadati</taxon>
        <taxon>Pseudomonadota</taxon>
        <taxon>Alphaproteobacteria</taxon>
        <taxon>Hyphomicrobiales</taxon>
        <taxon>Rhizobiaceae</taxon>
        <taxon>Sinorhizobium/Ensifer group</taxon>
        <taxon>Sinorhizobium</taxon>
    </lineage>
</organism>
<geneLocation type="plasmid">
    <name>pSymB</name>
    <name>megaplasmid 2</name>
</geneLocation>
<proteinExistence type="inferred from homology"/>
<sequence>MDANVSARINLMRILLISGIVFVHVPYNPQWSPFLGNYGMLDWLRVFLGESLFRIGVPCLSAISGYLLFRRGLADFDYWKTLKTKARTVLLPFLIWSGSFFVVVYAIQRQGLGFGYLPDTINATPRQWLSMAFAVEATPVNLPLYFLRDLMLCILLSPLLALLVSRYPRVTLLALLAYAILPLPNGIFLKKSILFGFSAGIYASLHGVNIKMLDRFAAPIAAGFLAIAVVIAVGLYYTGPDFPLWLDMALRLTSIAGIIGSWAISELLVRTRFGEKLGRGSGLSFWIFCGHYPLLVLFWMIWNRTGLSYYPLFYFTAPFIAIAILVASHNLVRRLAPDLLAVLTGSRTGAKRMATQPPQGAQAGYSPQQR</sequence>
<reference key="1">
    <citation type="journal article" date="1993" name="J. Bacteriol.">
        <title>Family of glycosyl transferases needed for the synthesis of succinoglycan by Rhizobium meliloti.</title>
        <authorList>
            <person name="Glucksmann M.A."/>
            <person name="Reuber T.L."/>
            <person name="Walker G.C."/>
        </authorList>
    </citation>
    <scope>NUCLEOTIDE SEQUENCE [GENOMIC DNA]</scope>
    <source>
        <strain>1021</strain>
    </source>
</reference>
<reference key="2">
    <citation type="journal article" date="1993" name="Mol. Gen. Genet.">
        <title>Analysis of the Rhizobium meliloti exoH/exoK/exoL fragment: ExoK shows homology to excreted endo-beta-1,3-1,4-glucanases and ExoH resembles membrane proteins.</title>
        <authorList>
            <person name="Becker A."/>
            <person name="Kleickmann A."/>
            <person name="Arnold W."/>
            <person name="Puehler A."/>
        </authorList>
    </citation>
    <scope>NUCLEOTIDE SEQUENCE [GENOMIC DNA]</scope>
    <source>
        <strain>RCR2011 / SU47</strain>
    </source>
</reference>
<reference key="3">
    <citation type="journal article" date="2001" name="Proc. Natl. Acad. Sci. U.S.A.">
        <title>The complete sequence of the 1,683-kb pSymB megaplasmid from the N2-fixing endosymbiont Sinorhizobium meliloti.</title>
        <authorList>
            <person name="Finan T.M."/>
            <person name="Weidner S."/>
            <person name="Wong K."/>
            <person name="Buhrmester J."/>
            <person name="Chain P."/>
            <person name="Vorhoelter F.J."/>
            <person name="Hernandez-Lucas I."/>
            <person name="Becker A."/>
            <person name="Cowie A."/>
            <person name="Gouzy J."/>
            <person name="Golding B."/>
            <person name="Puehler A."/>
        </authorList>
    </citation>
    <scope>NUCLEOTIDE SEQUENCE [LARGE SCALE GENOMIC DNA]</scope>
    <source>
        <strain>1021</strain>
    </source>
</reference>
<reference key="4">
    <citation type="journal article" date="2001" name="Science">
        <title>The composite genome of the legume symbiont Sinorhizobium meliloti.</title>
        <authorList>
            <person name="Galibert F."/>
            <person name="Finan T.M."/>
            <person name="Long S.R."/>
            <person name="Puehler A."/>
            <person name="Abola P."/>
            <person name="Ampe F."/>
            <person name="Barloy-Hubler F."/>
            <person name="Barnett M.J."/>
            <person name="Becker A."/>
            <person name="Boistard P."/>
            <person name="Bothe G."/>
            <person name="Boutry M."/>
            <person name="Bowser L."/>
            <person name="Buhrmester J."/>
            <person name="Cadieu E."/>
            <person name="Capela D."/>
            <person name="Chain P."/>
            <person name="Cowie A."/>
            <person name="Davis R.W."/>
            <person name="Dreano S."/>
            <person name="Federspiel N.A."/>
            <person name="Fisher R.F."/>
            <person name="Gloux S."/>
            <person name="Godrie T."/>
            <person name="Goffeau A."/>
            <person name="Golding B."/>
            <person name="Gouzy J."/>
            <person name="Gurjal M."/>
            <person name="Hernandez-Lucas I."/>
            <person name="Hong A."/>
            <person name="Huizar L."/>
            <person name="Hyman R.W."/>
            <person name="Jones T."/>
            <person name="Kahn D."/>
            <person name="Kahn M.L."/>
            <person name="Kalman S."/>
            <person name="Keating D.H."/>
            <person name="Kiss E."/>
            <person name="Komp C."/>
            <person name="Lelaure V."/>
            <person name="Masuy D."/>
            <person name="Palm C."/>
            <person name="Peck M.C."/>
            <person name="Pohl T.M."/>
            <person name="Portetelle D."/>
            <person name="Purnelle B."/>
            <person name="Ramsperger U."/>
            <person name="Surzycki R."/>
            <person name="Thebault P."/>
            <person name="Vandenbol M."/>
            <person name="Vorhoelter F.J."/>
            <person name="Weidner S."/>
            <person name="Wells D.H."/>
            <person name="Wong K."/>
            <person name="Yeh K.-C."/>
            <person name="Batut J."/>
        </authorList>
    </citation>
    <scope>NUCLEOTIDE SEQUENCE [LARGE SCALE GENOMIC DNA]</scope>
    <source>
        <strain>1021</strain>
    </source>
</reference>
<dbReference type="EMBL" id="L20758">
    <property type="protein sequence ID" value="AAA16049.1"/>
    <property type="molecule type" value="Unassigned_DNA"/>
</dbReference>
<dbReference type="EMBL" id="Z17219">
    <property type="protein sequence ID" value="CAA78926.1"/>
    <property type="status" value="ALT_INIT"/>
    <property type="molecule type" value="Genomic_DNA"/>
</dbReference>
<dbReference type="EMBL" id="AL591985">
    <property type="protein sequence ID" value="CAC49479.1"/>
    <property type="molecule type" value="Genomic_DNA"/>
</dbReference>
<dbReference type="PIR" id="G95976">
    <property type="entry name" value="G95976"/>
</dbReference>
<dbReference type="PIR" id="S34803">
    <property type="entry name" value="S34803"/>
</dbReference>
<dbReference type="RefSeq" id="NP_437619.1">
    <property type="nucleotide sequence ID" value="NC_003078.1"/>
</dbReference>
<dbReference type="RefSeq" id="WP_010975916.1">
    <property type="nucleotide sequence ID" value="NC_003078.1"/>
</dbReference>
<dbReference type="EnsemblBacteria" id="CAC49479">
    <property type="protein sequence ID" value="CAC49479"/>
    <property type="gene ID" value="SM_b20954"/>
</dbReference>
<dbReference type="KEGG" id="sme:SM_b20954"/>
<dbReference type="PATRIC" id="fig|266834.11.peg.6007"/>
<dbReference type="eggNOG" id="COG1835">
    <property type="taxonomic scope" value="Bacteria"/>
</dbReference>
<dbReference type="HOGENOM" id="CLU_054154_1_0_5"/>
<dbReference type="OrthoDB" id="6064642at2"/>
<dbReference type="BioCyc" id="MetaCyc:SM_B20954-MONOMER"/>
<dbReference type="UniPathway" id="UPA00631"/>
<dbReference type="Proteomes" id="UP000001976">
    <property type="component" value="Plasmid pSymB"/>
</dbReference>
<dbReference type="GO" id="GO:0005886">
    <property type="term" value="C:plasma membrane"/>
    <property type="evidence" value="ECO:0007669"/>
    <property type="project" value="UniProtKB-SubCell"/>
</dbReference>
<dbReference type="GO" id="GO:0016413">
    <property type="term" value="F:O-acetyltransferase activity"/>
    <property type="evidence" value="ECO:0007669"/>
    <property type="project" value="TreeGrafter"/>
</dbReference>
<dbReference type="GO" id="GO:0009246">
    <property type="term" value="P:enterobacterial common antigen biosynthetic process"/>
    <property type="evidence" value="ECO:0007669"/>
    <property type="project" value="TreeGrafter"/>
</dbReference>
<dbReference type="InterPro" id="IPR002656">
    <property type="entry name" value="Acyl_transf_3_dom"/>
</dbReference>
<dbReference type="PANTHER" id="PTHR40074">
    <property type="entry name" value="O-ACETYLTRANSFERASE WECH"/>
    <property type="match status" value="1"/>
</dbReference>
<dbReference type="PANTHER" id="PTHR40074:SF2">
    <property type="entry name" value="O-ACETYLTRANSFERASE WECH"/>
    <property type="match status" value="1"/>
</dbReference>
<dbReference type="Pfam" id="PF01757">
    <property type="entry name" value="Acyl_transf_3"/>
    <property type="match status" value="1"/>
</dbReference>
<feature type="chain" id="PRO_0000208070" description="Succinoglycan biosynthesis protein ExoH">
    <location>
        <begin position="1"/>
        <end position="370"/>
    </location>
</feature>
<feature type="transmembrane region" description="Helical" evidence="1">
    <location>
        <begin position="14"/>
        <end position="34"/>
    </location>
</feature>
<feature type="transmembrane region" description="Helical" evidence="1">
    <location>
        <begin position="46"/>
        <end position="66"/>
    </location>
</feature>
<feature type="transmembrane region" description="Helical" evidence="1">
    <location>
        <begin position="88"/>
        <end position="108"/>
    </location>
</feature>
<feature type="transmembrane region" description="Helical" evidence="1">
    <location>
        <begin position="144"/>
        <end position="164"/>
    </location>
</feature>
<feature type="transmembrane region" description="Helical" evidence="1">
    <location>
        <begin position="170"/>
        <end position="190"/>
    </location>
</feature>
<feature type="transmembrane region" description="Helical" evidence="1">
    <location>
        <begin position="193"/>
        <end position="213"/>
    </location>
</feature>
<feature type="transmembrane region" description="Helical" evidence="1">
    <location>
        <begin position="216"/>
        <end position="236"/>
    </location>
</feature>
<feature type="transmembrane region" description="Helical" evidence="1">
    <location>
        <begin position="244"/>
        <end position="264"/>
    </location>
</feature>
<feature type="transmembrane region" description="Helical" evidence="1">
    <location>
        <begin position="282"/>
        <end position="302"/>
    </location>
</feature>
<feature type="transmembrane region" description="Helical" evidence="1">
    <location>
        <begin position="307"/>
        <end position="327"/>
    </location>
</feature>
<feature type="region of interest" description="Disordered" evidence="2">
    <location>
        <begin position="350"/>
        <end position="370"/>
    </location>
</feature>
<feature type="sequence conflict" description="In Ref. 1; AAA16049." evidence="3" ref="1">
    <original>A</original>
    <variation>E</variation>
    <location>
        <position position="218"/>
    </location>
</feature>
<feature type="sequence conflict" description="In Ref. 1; AAA16049." evidence="3" ref="1">
    <original>R</original>
    <variation>G</variation>
    <location>
        <position position="270"/>
    </location>
</feature>
<feature type="sequence conflict" description="In Ref. 2; CAA78926." evidence="3" ref="2">
    <original>P</original>
    <variation>A</variation>
    <location>
        <position position="337"/>
    </location>
</feature>
<name>EXOH_RHIME</name>
<evidence type="ECO:0000255" key="1"/>
<evidence type="ECO:0000256" key="2">
    <source>
        <dbReference type="SAM" id="MobiDB-lite"/>
    </source>
</evidence>
<evidence type="ECO:0000305" key="3"/>
<protein>
    <recommendedName>
        <fullName>Succinoglycan biosynthesis protein ExoH</fullName>
    </recommendedName>
</protein>
<keyword id="KW-1003">Cell membrane</keyword>
<keyword id="KW-0270">Exopolysaccharide synthesis</keyword>
<keyword id="KW-0472">Membrane</keyword>
<keyword id="KW-0614">Plasmid</keyword>
<keyword id="KW-1185">Reference proteome</keyword>
<keyword id="KW-0812">Transmembrane</keyword>
<keyword id="KW-1133">Transmembrane helix</keyword>
<comment type="function">
    <text>Required for the succinyl modification of the seventh sugar (glucose) of the octasaccharide subunit of succinoglycan (EPS I).</text>
</comment>
<comment type="pathway">
    <text>Glycan metabolism; exopolysaccharide biosynthesis.</text>
</comment>
<comment type="subcellular location">
    <subcellularLocation>
        <location>Cell membrane</location>
        <topology>Multi-pass membrane protein</topology>
    </subcellularLocation>
</comment>
<comment type="similarity">
    <text evidence="3">Belongs to the acyltransferase 3 family.</text>
</comment>
<comment type="sequence caution" evidence="3">
    <conflict type="erroneous initiation">
        <sequence resource="EMBL-CDS" id="CAA78926"/>
    </conflict>
</comment>
<gene>
    <name type="primary">exoH</name>
    <name type="ordered locus">RB1079</name>
    <name type="ORF">SMb20954</name>
</gene>